<sequence length="105" mass="12411">MDKKELFDALDDFSQQLLVTLADVEAIKKNLKSLVEENTALRLENSKLRERLGEVEADAPVKAKHVRESVRRIYRDGFHVCNDFYGQRREQDEECMFCDELLYRE</sequence>
<name>YABA_STRPN</name>
<keyword id="KW-0963">Cytoplasm</keyword>
<keyword id="KW-0235">DNA replication</keyword>
<keyword id="KW-0236">DNA replication inhibitor</keyword>
<keyword id="KW-0479">Metal-binding</keyword>
<keyword id="KW-1185">Reference proteome</keyword>
<keyword id="KW-0862">Zinc</keyword>
<protein>
    <recommendedName>
        <fullName evidence="1">Replication initiation control protein YabA</fullName>
    </recommendedName>
</protein>
<organism>
    <name type="scientific">Streptococcus pneumoniae serotype 4 (strain ATCC BAA-334 / TIGR4)</name>
    <dbReference type="NCBI Taxonomy" id="170187"/>
    <lineage>
        <taxon>Bacteria</taxon>
        <taxon>Bacillati</taxon>
        <taxon>Bacillota</taxon>
        <taxon>Bacilli</taxon>
        <taxon>Lactobacillales</taxon>
        <taxon>Streptococcaceae</taxon>
        <taxon>Streptococcus</taxon>
    </lineage>
</organism>
<dbReference type="EMBL" id="AE005672">
    <property type="protein sequence ID" value="AAK75061.1"/>
    <property type="molecule type" value="Genomic_DNA"/>
</dbReference>
<dbReference type="PIR" id="D95108">
    <property type="entry name" value="D95108"/>
</dbReference>
<dbReference type="RefSeq" id="WP_000358228.1">
    <property type="nucleotide sequence ID" value="NZ_CP155539.1"/>
</dbReference>
<dbReference type="SMR" id="Q97R89"/>
<dbReference type="PaxDb" id="170187-SP_0937"/>
<dbReference type="DNASU" id="930890"/>
<dbReference type="EnsemblBacteria" id="AAK75061">
    <property type="protein sequence ID" value="AAK75061"/>
    <property type="gene ID" value="SP_0937"/>
</dbReference>
<dbReference type="GeneID" id="93739792"/>
<dbReference type="KEGG" id="spn:SP_0937"/>
<dbReference type="eggNOG" id="COG4467">
    <property type="taxonomic scope" value="Bacteria"/>
</dbReference>
<dbReference type="PhylomeDB" id="Q97R89"/>
<dbReference type="BioCyc" id="SPNE170187:G1FZB-963-MONOMER"/>
<dbReference type="Proteomes" id="UP000000585">
    <property type="component" value="Chromosome"/>
</dbReference>
<dbReference type="GO" id="GO:0009295">
    <property type="term" value="C:nucleoid"/>
    <property type="evidence" value="ECO:0007669"/>
    <property type="project" value="UniProtKB-SubCell"/>
</dbReference>
<dbReference type="GO" id="GO:0006260">
    <property type="term" value="P:DNA replication"/>
    <property type="evidence" value="ECO:0007669"/>
    <property type="project" value="UniProtKB-UniRule"/>
</dbReference>
<dbReference type="HAMAP" id="MF_01159">
    <property type="entry name" value="YabA"/>
    <property type="match status" value="1"/>
</dbReference>
<dbReference type="InterPro" id="IPR010377">
    <property type="entry name" value="YabA"/>
</dbReference>
<dbReference type="NCBIfam" id="NF009640">
    <property type="entry name" value="PRK13169.1-1"/>
    <property type="match status" value="1"/>
</dbReference>
<dbReference type="Pfam" id="PF06156">
    <property type="entry name" value="YabA"/>
    <property type="match status" value="1"/>
</dbReference>
<dbReference type="PIRSF" id="PIRSF021439">
    <property type="entry name" value="DUF972"/>
    <property type="match status" value="1"/>
</dbReference>
<proteinExistence type="inferred from homology"/>
<comment type="function">
    <text evidence="1">Involved in control of chromosome replication initiation. Inhibits the cooperative binding of DnaA to the oriC region, thus negatively regulating initiation of chromosome replication. Inhibits the ability of DnaA-ATP to form a helix on DNA; does not disassemble preformed DnaA-DNA helices. Decreases the residence time of DnaA on the chromosome at its binding sites (oriC, replication forks and promoter-binding sites). Tethers DnaA to the replication machinery via the DNA polymerase beta sliding clamp subunit (dnaN). Associates with oriC and other DnaA targets on the chromosome in a DnaA-dependent manner.</text>
</comment>
<comment type="cofactor">
    <cofactor evidence="1">
        <name>Zn(2+)</name>
        <dbReference type="ChEBI" id="CHEBI:29105"/>
    </cofactor>
    <text evidence="1">Binds 1 zinc ion per subunit.</text>
</comment>
<comment type="subunit">
    <text evidence="1">Homotetramer. Interacts with both DnaA and DnaN, acting as a bridge between these two proteins.</text>
</comment>
<comment type="subcellular location">
    <subcellularLocation>
        <location evidence="1">Cytoplasm</location>
        <location evidence="1">Nucleoid</location>
    </subcellularLocation>
    <text evidence="1">Localizes in tight foci, which correspond to the replisome at mid-cell throughout the cell cycle.</text>
</comment>
<comment type="similarity">
    <text evidence="1">Belongs to the YabA family.</text>
</comment>
<gene>
    <name evidence="1" type="primary">yabA</name>
    <name type="ordered locus">SP_0937</name>
</gene>
<reference key="1">
    <citation type="journal article" date="2001" name="Science">
        <title>Complete genome sequence of a virulent isolate of Streptococcus pneumoniae.</title>
        <authorList>
            <person name="Tettelin H."/>
            <person name="Nelson K.E."/>
            <person name="Paulsen I.T."/>
            <person name="Eisen J.A."/>
            <person name="Read T.D."/>
            <person name="Peterson S.N."/>
            <person name="Heidelberg J.F."/>
            <person name="DeBoy R.T."/>
            <person name="Haft D.H."/>
            <person name="Dodson R.J."/>
            <person name="Durkin A.S."/>
            <person name="Gwinn M.L."/>
            <person name="Kolonay J.F."/>
            <person name="Nelson W.C."/>
            <person name="Peterson J.D."/>
            <person name="Umayam L.A."/>
            <person name="White O."/>
            <person name="Salzberg S.L."/>
            <person name="Lewis M.R."/>
            <person name="Radune D."/>
            <person name="Holtzapple E.K."/>
            <person name="Khouri H.M."/>
            <person name="Wolf A.M."/>
            <person name="Utterback T.R."/>
            <person name="Hansen C.L."/>
            <person name="McDonald L.A."/>
            <person name="Feldblyum T.V."/>
            <person name="Angiuoli S.V."/>
            <person name="Dickinson T."/>
            <person name="Hickey E.K."/>
            <person name="Holt I.E."/>
            <person name="Loftus B.J."/>
            <person name="Yang F."/>
            <person name="Smith H.O."/>
            <person name="Venter J.C."/>
            <person name="Dougherty B.A."/>
            <person name="Morrison D.A."/>
            <person name="Hollingshead S.K."/>
            <person name="Fraser C.M."/>
        </authorList>
    </citation>
    <scope>NUCLEOTIDE SEQUENCE [LARGE SCALE GENOMIC DNA]</scope>
    <source>
        <strain>ATCC BAA-334 / TIGR4</strain>
    </source>
</reference>
<evidence type="ECO:0000255" key="1">
    <source>
        <dbReference type="HAMAP-Rule" id="MF_01159"/>
    </source>
</evidence>
<accession>Q97R89</accession>
<feature type="chain" id="PRO_0000211927" description="Replication initiation control protein YabA">
    <location>
        <begin position="1"/>
        <end position="105"/>
    </location>
</feature>
<feature type="binding site" evidence="1">
    <location>
        <position position="79"/>
    </location>
    <ligand>
        <name>Zn(2+)</name>
        <dbReference type="ChEBI" id="CHEBI:29105"/>
    </ligand>
</feature>
<feature type="binding site" evidence="1">
    <location>
        <position position="81"/>
    </location>
    <ligand>
        <name>Zn(2+)</name>
        <dbReference type="ChEBI" id="CHEBI:29105"/>
    </ligand>
</feature>
<feature type="binding site" evidence="1">
    <location>
        <position position="95"/>
    </location>
    <ligand>
        <name>Zn(2+)</name>
        <dbReference type="ChEBI" id="CHEBI:29105"/>
    </ligand>
</feature>
<feature type="binding site" evidence="1">
    <location>
        <position position="98"/>
    </location>
    <ligand>
        <name>Zn(2+)</name>
        <dbReference type="ChEBI" id="CHEBI:29105"/>
    </ligand>
</feature>